<evidence type="ECO:0000255" key="1">
    <source>
        <dbReference type="HAMAP-Rule" id="MF_00123"/>
    </source>
</evidence>
<accession>A4WLP0</accession>
<organism>
    <name type="scientific">Pyrobaculum arsenaticum (strain DSM 13514 / JCM 11321 / PZ6)</name>
    <dbReference type="NCBI Taxonomy" id="340102"/>
    <lineage>
        <taxon>Archaea</taxon>
        <taxon>Thermoproteota</taxon>
        <taxon>Thermoprotei</taxon>
        <taxon>Thermoproteales</taxon>
        <taxon>Thermoproteaceae</taxon>
        <taxon>Pyrobaculum</taxon>
    </lineage>
</organism>
<dbReference type="EC" id="6.1.1.19" evidence="1"/>
<dbReference type="EMBL" id="CP000660">
    <property type="protein sequence ID" value="ABP51307.1"/>
    <property type="molecule type" value="Genomic_DNA"/>
</dbReference>
<dbReference type="SMR" id="A4WLP0"/>
<dbReference type="STRING" id="340102.Pars_1756"/>
<dbReference type="KEGG" id="pas:Pars_1756"/>
<dbReference type="HOGENOM" id="CLU_006406_6_1_2"/>
<dbReference type="OrthoDB" id="372102at2157"/>
<dbReference type="PhylomeDB" id="A4WLP0"/>
<dbReference type="Proteomes" id="UP000001567">
    <property type="component" value="Chromosome"/>
</dbReference>
<dbReference type="GO" id="GO:0005737">
    <property type="term" value="C:cytoplasm"/>
    <property type="evidence" value="ECO:0007669"/>
    <property type="project" value="UniProtKB-SubCell"/>
</dbReference>
<dbReference type="GO" id="GO:0004814">
    <property type="term" value="F:arginine-tRNA ligase activity"/>
    <property type="evidence" value="ECO:0007669"/>
    <property type="project" value="UniProtKB-UniRule"/>
</dbReference>
<dbReference type="GO" id="GO:0005524">
    <property type="term" value="F:ATP binding"/>
    <property type="evidence" value="ECO:0007669"/>
    <property type="project" value="UniProtKB-UniRule"/>
</dbReference>
<dbReference type="GO" id="GO:0006420">
    <property type="term" value="P:arginyl-tRNA aminoacylation"/>
    <property type="evidence" value="ECO:0007669"/>
    <property type="project" value="UniProtKB-UniRule"/>
</dbReference>
<dbReference type="FunFam" id="3.40.50.620:FF:000659">
    <property type="entry name" value="DALR anticodon binding domain containing protein"/>
    <property type="match status" value="1"/>
</dbReference>
<dbReference type="Gene3D" id="3.40.50.620">
    <property type="entry name" value="HUPs"/>
    <property type="match status" value="1"/>
</dbReference>
<dbReference type="Gene3D" id="1.10.730.10">
    <property type="entry name" value="Isoleucyl-tRNA Synthetase, Domain 1"/>
    <property type="match status" value="1"/>
</dbReference>
<dbReference type="HAMAP" id="MF_00123">
    <property type="entry name" value="Arg_tRNA_synth"/>
    <property type="match status" value="1"/>
</dbReference>
<dbReference type="InterPro" id="IPR001278">
    <property type="entry name" value="Arg-tRNA-ligase"/>
</dbReference>
<dbReference type="InterPro" id="IPR035684">
    <property type="entry name" value="ArgRS_core"/>
</dbReference>
<dbReference type="InterPro" id="IPR008909">
    <property type="entry name" value="DALR_anticod-bd"/>
</dbReference>
<dbReference type="InterPro" id="IPR014729">
    <property type="entry name" value="Rossmann-like_a/b/a_fold"/>
</dbReference>
<dbReference type="InterPro" id="IPR009080">
    <property type="entry name" value="tRNAsynth_Ia_anticodon-bd"/>
</dbReference>
<dbReference type="NCBIfam" id="TIGR00456">
    <property type="entry name" value="argS"/>
    <property type="match status" value="1"/>
</dbReference>
<dbReference type="NCBIfam" id="NF002446">
    <property type="entry name" value="PRK01611.3-3"/>
    <property type="match status" value="1"/>
</dbReference>
<dbReference type="PANTHER" id="PTHR11956:SF5">
    <property type="entry name" value="ARGININE--TRNA LIGASE, CYTOPLASMIC"/>
    <property type="match status" value="1"/>
</dbReference>
<dbReference type="PANTHER" id="PTHR11956">
    <property type="entry name" value="ARGINYL-TRNA SYNTHETASE"/>
    <property type="match status" value="1"/>
</dbReference>
<dbReference type="Pfam" id="PF05746">
    <property type="entry name" value="DALR_1"/>
    <property type="match status" value="1"/>
</dbReference>
<dbReference type="Pfam" id="PF00750">
    <property type="entry name" value="tRNA-synt_1d"/>
    <property type="match status" value="2"/>
</dbReference>
<dbReference type="PRINTS" id="PR01038">
    <property type="entry name" value="TRNASYNTHARG"/>
</dbReference>
<dbReference type="SMART" id="SM00836">
    <property type="entry name" value="DALR_1"/>
    <property type="match status" value="1"/>
</dbReference>
<dbReference type="SUPFAM" id="SSF47323">
    <property type="entry name" value="Anticodon-binding domain of a subclass of class I aminoacyl-tRNA synthetases"/>
    <property type="match status" value="1"/>
</dbReference>
<dbReference type="SUPFAM" id="SSF52374">
    <property type="entry name" value="Nucleotidylyl transferase"/>
    <property type="match status" value="1"/>
</dbReference>
<proteinExistence type="inferred from homology"/>
<gene>
    <name evidence="1" type="primary">argS</name>
    <name type="ordered locus">Pars_1756</name>
</gene>
<name>SYR_PYRAR</name>
<keyword id="KW-0030">Aminoacyl-tRNA synthetase</keyword>
<keyword id="KW-0067">ATP-binding</keyword>
<keyword id="KW-0963">Cytoplasm</keyword>
<keyword id="KW-0436">Ligase</keyword>
<keyword id="KW-0547">Nucleotide-binding</keyword>
<keyword id="KW-0648">Protein biosynthesis</keyword>
<protein>
    <recommendedName>
        <fullName evidence="1">Arginine--tRNA ligase</fullName>
        <ecNumber evidence="1">6.1.1.19</ecNumber>
    </recommendedName>
    <alternativeName>
        <fullName evidence="1">Arginyl-tRNA synthetase</fullName>
        <shortName evidence="1">ArgRS</shortName>
    </alternativeName>
</protein>
<sequence>MDPLKLPKQEFADALGKISSRLGLAEVPEIEKTRRYGYFSARFHKYKIDPTRLRDAVEELSNAGFQYISGLSAEGLYVNADLNAKRLGELVFEAVAKMGKKYGFTEECQLGSFLVEHTSANPIHPLHIGHGRNAILGDSLARLLRFCDNRVEVHFYVDDCGVQVMYATIGYNAVRDEAREWIERAKPDLVVGHIYSATNAVAEIGRLKKEAERAQDDEHKRSLIGEIDEWVAVLKRLMESEGDLVAKVVERLGQRDVAGEAVELNRRYEAGDPEAKRVVREVVDLVLRGQRETLARLGIEIDRWDYESELAVWSGEASRIVEELQRRWPQYVEYKGGAVVFRADKFVDDFKLWDVLDLPKFIPPVTLTRSDGTTLYVTRDVAYALWQARQGFDKVVRVISTEQTHEQAHVRIILYALGFEDVAKKIVHYAYEMVNLPGMKMSARRGRYISLDEILDEAAERSASLVKEKSPEIAGVIAEKVGVGSVRYAFLSTSPRKPIEFRWEVVLNLRQNSGTFLQYTYVRAYSILEKAPDVERASVPEQMLEEEKELLVKIAEWPSVVREAVRALRPDYVAEYLDGLALLFNSYYEKAPVLKAVEGVRKFRIALVNAVKTVLEAGFYILGIPTLTKM</sequence>
<feature type="chain" id="PRO_1000018097" description="Arginine--tRNA ligase">
    <location>
        <begin position="1"/>
        <end position="630"/>
    </location>
</feature>
<feature type="short sequence motif" description="'HIGH' region">
    <location>
        <begin position="120"/>
        <end position="130"/>
    </location>
</feature>
<comment type="catalytic activity">
    <reaction evidence="1">
        <text>tRNA(Arg) + L-arginine + ATP = L-arginyl-tRNA(Arg) + AMP + diphosphate</text>
        <dbReference type="Rhea" id="RHEA:20301"/>
        <dbReference type="Rhea" id="RHEA-COMP:9658"/>
        <dbReference type="Rhea" id="RHEA-COMP:9673"/>
        <dbReference type="ChEBI" id="CHEBI:30616"/>
        <dbReference type="ChEBI" id="CHEBI:32682"/>
        <dbReference type="ChEBI" id="CHEBI:33019"/>
        <dbReference type="ChEBI" id="CHEBI:78442"/>
        <dbReference type="ChEBI" id="CHEBI:78513"/>
        <dbReference type="ChEBI" id="CHEBI:456215"/>
        <dbReference type="EC" id="6.1.1.19"/>
    </reaction>
</comment>
<comment type="subcellular location">
    <subcellularLocation>
        <location evidence="1">Cytoplasm</location>
    </subcellularLocation>
</comment>
<comment type="similarity">
    <text evidence="1">Belongs to the class-I aminoacyl-tRNA synthetase family.</text>
</comment>
<reference key="1">
    <citation type="submission" date="2007-04" db="EMBL/GenBank/DDBJ databases">
        <title>Complete sequence of Pyrobaculum arsenaticum DSM 13514.</title>
        <authorList>
            <consortium name="US DOE Joint Genome Institute"/>
            <person name="Copeland A."/>
            <person name="Lucas S."/>
            <person name="Lapidus A."/>
            <person name="Barry K."/>
            <person name="Glavina del Rio T."/>
            <person name="Dalin E."/>
            <person name="Tice H."/>
            <person name="Pitluck S."/>
            <person name="Chain P."/>
            <person name="Malfatti S."/>
            <person name="Shin M."/>
            <person name="Vergez L."/>
            <person name="Schmutz J."/>
            <person name="Larimer F."/>
            <person name="Land M."/>
            <person name="Hauser L."/>
            <person name="Kyrpides N."/>
            <person name="Mikhailova N."/>
            <person name="Cozen A.E."/>
            <person name="Fitz-Gibbon S.T."/>
            <person name="House C.H."/>
            <person name="Saltikov C."/>
            <person name="Lowe T.M."/>
            <person name="Richardson P."/>
        </authorList>
    </citation>
    <scope>NUCLEOTIDE SEQUENCE [LARGE SCALE GENOMIC DNA]</scope>
    <source>
        <strain>ATCC 700994 / DSM 13514 / JCM 11321 / PZ6</strain>
    </source>
</reference>